<dbReference type="EMBL" id="CP000745">
    <property type="protein sequence ID" value="ABR65466.1"/>
    <property type="molecule type" value="Genomic_DNA"/>
</dbReference>
<dbReference type="SMR" id="A6VG90"/>
<dbReference type="STRING" id="426368.MmarC7_0397"/>
<dbReference type="KEGG" id="mmz:MmarC7_0397"/>
<dbReference type="eggNOG" id="arCOG04126">
    <property type="taxonomic scope" value="Archaea"/>
</dbReference>
<dbReference type="HOGENOM" id="CLU_208825_0_0_2"/>
<dbReference type="OrthoDB" id="5619at2157"/>
<dbReference type="GO" id="GO:1990904">
    <property type="term" value="C:ribonucleoprotein complex"/>
    <property type="evidence" value="ECO:0007669"/>
    <property type="project" value="UniProtKB-KW"/>
</dbReference>
<dbReference type="GO" id="GO:0005840">
    <property type="term" value="C:ribosome"/>
    <property type="evidence" value="ECO:0007669"/>
    <property type="project" value="UniProtKB-KW"/>
</dbReference>
<dbReference type="GO" id="GO:0019843">
    <property type="term" value="F:rRNA binding"/>
    <property type="evidence" value="ECO:0007669"/>
    <property type="project" value="UniProtKB-KW"/>
</dbReference>
<dbReference type="GO" id="GO:0003735">
    <property type="term" value="F:structural constituent of ribosome"/>
    <property type="evidence" value="ECO:0007669"/>
    <property type="project" value="InterPro"/>
</dbReference>
<dbReference type="GO" id="GO:0008270">
    <property type="term" value="F:zinc ion binding"/>
    <property type="evidence" value="ECO:0007669"/>
    <property type="project" value="UniProtKB-UniRule"/>
</dbReference>
<dbReference type="GO" id="GO:0006412">
    <property type="term" value="P:translation"/>
    <property type="evidence" value="ECO:0007669"/>
    <property type="project" value="UniProtKB-UniRule"/>
</dbReference>
<dbReference type="FunFam" id="2.20.25.30:FF:000003">
    <property type="entry name" value="50S ribosomal protein L37e"/>
    <property type="match status" value="1"/>
</dbReference>
<dbReference type="Gene3D" id="2.20.25.30">
    <property type="match status" value="1"/>
</dbReference>
<dbReference type="HAMAP" id="MF_00547">
    <property type="entry name" value="Ribosomal_eL37"/>
    <property type="match status" value="1"/>
</dbReference>
<dbReference type="InterPro" id="IPR001569">
    <property type="entry name" value="Ribosomal_eL37"/>
</dbReference>
<dbReference type="InterPro" id="IPR011331">
    <property type="entry name" value="Ribosomal_eL37/eL43"/>
</dbReference>
<dbReference type="InterPro" id="IPR018267">
    <property type="entry name" value="Ribosomal_eL37_CS"/>
</dbReference>
<dbReference type="InterPro" id="IPR011332">
    <property type="entry name" value="Ribosomal_zn-bd"/>
</dbReference>
<dbReference type="NCBIfam" id="NF003214">
    <property type="entry name" value="PRK04179.1"/>
    <property type="match status" value="1"/>
</dbReference>
<dbReference type="Pfam" id="PF01907">
    <property type="entry name" value="Ribosomal_L37e"/>
    <property type="match status" value="1"/>
</dbReference>
<dbReference type="SUPFAM" id="SSF57829">
    <property type="entry name" value="Zn-binding ribosomal proteins"/>
    <property type="match status" value="1"/>
</dbReference>
<dbReference type="PROSITE" id="PS01077">
    <property type="entry name" value="RIBOSOMAL_L37E"/>
    <property type="match status" value="1"/>
</dbReference>
<gene>
    <name evidence="1" type="primary">rpl37e</name>
    <name type="ordered locus">MmarC7_0397</name>
</gene>
<proteinExistence type="inferred from homology"/>
<reference key="1">
    <citation type="submission" date="2007-06" db="EMBL/GenBank/DDBJ databases">
        <title>Complete sequence of Methanococcus maripaludis C7.</title>
        <authorList>
            <consortium name="US DOE Joint Genome Institute"/>
            <person name="Copeland A."/>
            <person name="Lucas S."/>
            <person name="Lapidus A."/>
            <person name="Barry K."/>
            <person name="Glavina del Rio T."/>
            <person name="Dalin E."/>
            <person name="Tice H."/>
            <person name="Pitluck S."/>
            <person name="Clum A."/>
            <person name="Schmutz J."/>
            <person name="Larimer F."/>
            <person name="Land M."/>
            <person name="Hauser L."/>
            <person name="Kyrpides N."/>
            <person name="Anderson I."/>
            <person name="Sieprawska-Lupa M."/>
            <person name="Whitman W.B."/>
            <person name="Richardson P."/>
        </authorList>
    </citation>
    <scope>NUCLEOTIDE SEQUENCE [LARGE SCALE GENOMIC DNA]</scope>
    <source>
        <strain>C7 / ATCC BAA-1331</strain>
    </source>
</reference>
<evidence type="ECO:0000255" key="1">
    <source>
        <dbReference type="HAMAP-Rule" id="MF_00547"/>
    </source>
</evidence>
<evidence type="ECO:0000305" key="2"/>
<comment type="function">
    <text evidence="1">Binds to the 23S rRNA.</text>
</comment>
<comment type="cofactor">
    <cofactor evidence="1">
        <name>Zn(2+)</name>
        <dbReference type="ChEBI" id="CHEBI:29105"/>
    </cofactor>
    <text evidence="1">Binds 1 zinc ion per subunit.</text>
</comment>
<comment type="similarity">
    <text evidence="1">Belongs to the eukaryotic ribosomal protein eL37 family.</text>
</comment>
<protein>
    <recommendedName>
        <fullName evidence="1">Large ribosomal subunit protein eL37</fullName>
    </recommendedName>
    <alternativeName>
        <fullName evidence="2">50S ribosomal protein L37e</fullName>
    </alternativeName>
</protein>
<name>RL37_METM7</name>
<organism>
    <name type="scientific">Methanococcus maripaludis (strain C7 / ATCC BAA-1331)</name>
    <dbReference type="NCBI Taxonomy" id="426368"/>
    <lineage>
        <taxon>Archaea</taxon>
        <taxon>Methanobacteriati</taxon>
        <taxon>Methanobacteriota</taxon>
        <taxon>Methanomada group</taxon>
        <taxon>Methanococci</taxon>
        <taxon>Methanococcales</taxon>
        <taxon>Methanococcaceae</taxon>
        <taxon>Methanococcus</taxon>
    </lineage>
</organism>
<feature type="chain" id="PRO_1000017765" description="Large ribosomal subunit protein eL37">
    <location>
        <begin position="1"/>
        <end position="64"/>
    </location>
</feature>
<feature type="zinc finger region" description="C4-type" evidence="1">
    <location>
        <begin position="20"/>
        <end position="38"/>
    </location>
</feature>
<feature type="binding site" evidence="1">
    <location>
        <position position="20"/>
    </location>
    <ligand>
        <name>Zn(2+)</name>
        <dbReference type="ChEBI" id="CHEBI:29105"/>
    </ligand>
</feature>
<feature type="binding site" evidence="1">
    <location>
        <position position="23"/>
    </location>
    <ligand>
        <name>Zn(2+)</name>
        <dbReference type="ChEBI" id="CHEBI:29105"/>
    </ligand>
</feature>
<feature type="binding site" evidence="1">
    <location>
        <position position="35"/>
    </location>
    <ligand>
        <name>Zn(2+)</name>
        <dbReference type="ChEBI" id="CHEBI:29105"/>
    </ligand>
</feature>
<feature type="binding site" evidence="1">
    <location>
        <position position="38"/>
    </location>
    <ligand>
        <name>Zn(2+)</name>
        <dbReference type="ChEBI" id="CHEBI:29105"/>
    </ligand>
</feature>
<sequence length="64" mass="7245">MTKGTPSQGKHNKGSNHIVCRRCGRRSFHVRKKVCAACGFGKSSKIKRFAWQWKKVTGKGNRVK</sequence>
<keyword id="KW-0479">Metal-binding</keyword>
<keyword id="KW-0687">Ribonucleoprotein</keyword>
<keyword id="KW-0689">Ribosomal protein</keyword>
<keyword id="KW-0694">RNA-binding</keyword>
<keyword id="KW-0699">rRNA-binding</keyword>
<keyword id="KW-0862">Zinc</keyword>
<keyword id="KW-0863">Zinc-finger</keyword>
<accession>A6VG90</accession>